<comment type="function">
    <text evidence="1">Component of the Mediator complex, a coactivator involved in the regulated transcription of nearly all RNA polymerase II-dependent genes. Mediator functions as a bridge to convey information from gene-specific regulatory proteins to the basal RNA polymerase II transcription machinery. Mediator is recruited to promoters by direct interactions with regulatory proteins and serves as a scaffold for the assembly of a functional preinitiation complex with RNA polymerase II and the general transcription factors (By similarity).</text>
</comment>
<comment type="subunit">
    <text evidence="1">Component of the Mediator complex.</text>
</comment>
<comment type="subcellular location">
    <subcellularLocation>
        <location evidence="1">Nucleus</location>
    </subcellularLocation>
</comment>
<comment type="similarity">
    <text evidence="3">Belongs to the Mediator complex subunit 10 family.</text>
</comment>
<feature type="chain" id="PRO_0000303168" description="Mediator of RNA polymerase II transcription subunit 10">
    <location>
        <begin position="1"/>
        <end position="167"/>
    </location>
</feature>
<feature type="region of interest" description="Disordered" evidence="2">
    <location>
        <begin position="141"/>
        <end position="167"/>
    </location>
</feature>
<feature type="compositionally biased region" description="Gly residues" evidence="2">
    <location>
        <begin position="141"/>
        <end position="158"/>
    </location>
</feature>
<keyword id="KW-0010">Activator</keyword>
<keyword id="KW-0539">Nucleus</keyword>
<keyword id="KW-1185">Reference proteome</keyword>
<keyword id="KW-0804">Transcription</keyword>
<keyword id="KW-0805">Transcription regulation</keyword>
<gene>
    <name type="primary">NUT2</name>
    <name type="synonym">MED10</name>
    <name type="ORF">CHGG_03384</name>
</gene>
<protein>
    <recommendedName>
        <fullName>Mediator of RNA polymerase II transcription subunit 10</fullName>
    </recommendedName>
    <alternativeName>
        <fullName>Mediator complex subunit 10</fullName>
    </alternativeName>
</protein>
<sequence length="167" mass="18297">MAPINPDLQNVQDDIKNVIQDLFQVLVQVSNYDAAGRPTRDVLAQDIQTLDKTLHTLHTNAQHLPTPTADKPIPEPLIQYVENGRNPDIYTREFAELVRRMNQLARGKMHAFRDFRDVLAREMESALPELRADVQMVVGATGGRTVGGEGEGAGQGEGGEGRGEGGN</sequence>
<evidence type="ECO:0000250" key="1"/>
<evidence type="ECO:0000256" key="2">
    <source>
        <dbReference type="SAM" id="MobiDB-lite"/>
    </source>
</evidence>
<evidence type="ECO:0000305" key="3"/>
<organism>
    <name type="scientific">Chaetomium globosum (strain ATCC 6205 / CBS 148.51 / DSM 1962 / NBRC 6347 / NRRL 1970)</name>
    <name type="common">Soil fungus</name>
    <dbReference type="NCBI Taxonomy" id="306901"/>
    <lineage>
        <taxon>Eukaryota</taxon>
        <taxon>Fungi</taxon>
        <taxon>Dikarya</taxon>
        <taxon>Ascomycota</taxon>
        <taxon>Pezizomycotina</taxon>
        <taxon>Sordariomycetes</taxon>
        <taxon>Sordariomycetidae</taxon>
        <taxon>Sordariales</taxon>
        <taxon>Chaetomiaceae</taxon>
        <taxon>Chaetomium</taxon>
    </lineage>
</organism>
<proteinExistence type="inferred from homology"/>
<reference key="1">
    <citation type="journal article" date="2015" name="Genome Announc.">
        <title>Draft genome sequence of the cellulolytic fungus Chaetomium globosum.</title>
        <authorList>
            <person name="Cuomo C.A."/>
            <person name="Untereiner W.A."/>
            <person name="Ma L.-J."/>
            <person name="Grabherr M."/>
            <person name="Birren B.W."/>
        </authorList>
    </citation>
    <scope>NUCLEOTIDE SEQUENCE [LARGE SCALE GENOMIC DNA]</scope>
    <source>
        <strain>ATCC 6205 / CBS 148.51 / DSM 1962 / NBRC 6347 / NRRL 1970</strain>
    </source>
</reference>
<accession>Q2H8S0</accession>
<name>MED10_CHAGB</name>
<dbReference type="EMBL" id="CH408030">
    <property type="protein sequence ID" value="EAQ91449.1"/>
    <property type="molecule type" value="Genomic_DNA"/>
</dbReference>
<dbReference type="RefSeq" id="XP_001229900.1">
    <property type="nucleotide sequence ID" value="XM_001229899.1"/>
</dbReference>
<dbReference type="SMR" id="Q2H8S0"/>
<dbReference type="FunCoup" id="Q2H8S0">
    <property type="interactions" value="498"/>
</dbReference>
<dbReference type="STRING" id="306901.Q2H8S0"/>
<dbReference type="GeneID" id="4388777"/>
<dbReference type="VEuPathDB" id="FungiDB:CHGG_03384"/>
<dbReference type="eggNOG" id="KOG3046">
    <property type="taxonomic scope" value="Eukaryota"/>
</dbReference>
<dbReference type="HOGENOM" id="CLU_096169_0_0_1"/>
<dbReference type="InParanoid" id="Q2H8S0"/>
<dbReference type="OMA" id="QYQRAKM"/>
<dbReference type="OrthoDB" id="337270at2759"/>
<dbReference type="Proteomes" id="UP000001056">
    <property type="component" value="Unassembled WGS sequence"/>
</dbReference>
<dbReference type="GO" id="GO:0016592">
    <property type="term" value="C:mediator complex"/>
    <property type="evidence" value="ECO:0007669"/>
    <property type="project" value="InterPro"/>
</dbReference>
<dbReference type="GO" id="GO:0003712">
    <property type="term" value="F:transcription coregulator activity"/>
    <property type="evidence" value="ECO:0007669"/>
    <property type="project" value="InterPro"/>
</dbReference>
<dbReference type="GO" id="GO:0006357">
    <property type="term" value="P:regulation of transcription by RNA polymerase II"/>
    <property type="evidence" value="ECO:0007669"/>
    <property type="project" value="InterPro"/>
</dbReference>
<dbReference type="InterPro" id="IPR019145">
    <property type="entry name" value="Mediator_Med10"/>
</dbReference>
<dbReference type="PANTHER" id="PTHR13345">
    <property type="entry name" value="MEDIATOR OF RNA POLYMERASE II TRANSCRIPTION SUBUNIT 10"/>
    <property type="match status" value="1"/>
</dbReference>
<dbReference type="PANTHER" id="PTHR13345:SF13">
    <property type="entry name" value="MEDIATOR OF RNA POLYMERASE II TRANSCRIPTION SUBUNIT 10"/>
    <property type="match status" value="1"/>
</dbReference>
<dbReference type="Pfam" id="PF09748">
    <property type="entry name" value="Med10"/>
    <property type="match status" value="1"/>
</dbReference>